<gene>
    <name evidence="1" type="primary">ruvB</name>
    <name type="ordered locus">Franean1_5144</name>
</gene>
<keyword id="KW-0067">ATP-binding</keyword>
<keyword id="KW-0963">Cytoplasm</keyword>
<keyword id="KW-0227">DNA damage</keyword>
<keyword id="KW-0233">DNA recombination</keyword>
<keyword id="KW-0234">DNA repair</keyword>
<keyword id="KW-0238">DNA-binding</keyword>
<keyword id="KW-0378">Hydrolase</keyword>
<keyword id="KW-0547">Nucleotide-binding</keyword>
<name>RUVB_PARS2</name>
<feature type="chain" id="PRO_1000089645" description="Holliday junction branch migration complex subunit RuvB">
    <location>
        <begin position="1"/>
        <end position="353"/>
    </location>
</feature>
<feature type="region of interest" description="Large ATPase domain (RuvB-L)" evidence="1">
    <location>
        <begin position="1"/>
        <end position="183"/>
    </location>
</feature>
<feature type="region of interest" description="Small ATPAse domain (RuvB-S)" evidence="1">
    <location>
        <begin position="184"/>
        <end position="254"/>
    </location>
</feature>
<feature type="region of interest" description="Head domain (RuvB-H)" evidence="1">
    <location>
        <begin position="257"/>
        <end position="353"/>
    </location>
</feature>
<feature type="binding site" evidence="1">
    <location>
        <position position="22"/>
    </location>
    <ligand>
        <name>ATP</name>
        <dbReference type="ChEBI" id="CHEBI:30616"/>
    </ligand>
</feature>
<feature type="binding site" evidence="1">
    <location>
        <position position="23"/>
    </location>
    <ligand>
        <name>ATP</name>
        <dbReference type="ChEBI" id="CHEBI:30616"/>
    </ligand>
</feature>
<feature type="binding site" evidence="1">
    <location>
        <position position="64"/>
    </location>
    <ligand>
        <name>ATP</name>
        <dbReference type="ChEBI" id="CHEBI:30616"/>
    </ligand>
</feature>
<feature type="binding site" evidence="1">
    <location>
        <position position="67"/>
    </location>
    <ligand>
        <name>ATP</name>
        <dbReference type="ChEBI" id="CHEBI:30616"/>
    </ligand>
</feature>
<feature type="binding site" evidence="1">
    <location>
        <position position="68"/>
    </location>
    <ligand>
        <name>ATP</name>
        <dbReference type="ChEBI" id="CHEBI:30616"/>
    </ligand>
</feature>
<feature type="binding site" evidence="1">
    <location>
        <position position="68"/>
    </location>
    <ligand>
        <name>Mg(2+)</name>
        <dbReference type="ChEBI" id="CHEBI:18420"/>
    </ligand>
</feature>
<feature type="binding site" evidence="1">
    <location>
        <position position="69"/>
    </location>
    <ligand>
        <name>ATP</name>
        <dbReference type="ChEBI" id="CHEBI:30616"/>
    </ligand>
</feature>
<feature type="binding site" evidence="1">
    <location>
        <begin position="130"/>
        <end position="132"/>
    </location>
    <ligand>
        <name>ATP</name>
        <dbReference type="ChEBI" id="CHEBI:30616"/>
    </ligand>
</feature>
<feature type="binding site" evidence="1">
    <location>
        <position position="173"/>
    </location>
    <ligand>
        <name>ATP</name>
        <dbReference type="ChEBI" id="CHEBI:30616"/>
    </ligand>
</feature>
<feature type="binding site" evidence="1">
    <location>
        <position position="183"/>
    </location>
    <ligand>
        <name>ATP</name>
        <dbReference type="ChEBI" id="CHEBI:30616"/>
    </ligand>
</feature>
<feature type="binding site" evidence="1">
    <location>
        <position position="220"/>
    </location>
    <ligand>
        <name>ATP</name>
        <dbReference type="ChEBI" id="CHEBI:30616"/>
    </ligand>
</feature>
<feature type="binding site" evidence="1">
    <location>
        <position position="312"/>
    </location>
    <ligand>
        <name>DNA</name>
        <dbReference type="ChEBI" id="CHEBI:16991"/>
    </ligand>
</feature>
<feature type="binding site" evidence="1">
    <location>
        <position position="317"/>
    </location>
    <ligand>
        <name>DNA</name>
        <dbReference type="ChEBI" id="CHEBI:16991"/>
    </ligand>
</feature>
<sequence length="353" mass="37373">MSGEGLVSAAAAPEEQAFEAGLRPKNLDEFVGQRKVREQLSIMLEGARGRGRPPDHVLLSGPPGLGKTSLAMIIAEELGVPLRMTSGPAIERAGDLVAILTALTPGEVLFLDEIHRIARPAEELLYAAMEDFRVDVVLGKGPGATAIPLDLAPFTLVGATTRSGLLTGPLRDRFGFTAHMDFYDAAELALVLTRSARLLGVQLTEGGAAEVAGRSRGTPRIANRLLRRVRDYAEVRADGVVSREVARAALRIYDVDALGLDRLDRAVLDALVRRFGGGPVGLSTLAVAVGEEADTVEDVSEPFLLRAGLLIRTARGRVATPAAFTHLGLEPQSDQLGRSQAPAALFGEDLPAS</sequence>
<protein>
    <recommendedName>
        <fullName evidence="1">Holliday junction branch migration complex subunit RuvB</fullName>
        <ecNumber evidence="1">3.6.4.-</ecNumber>
    </recommendedName>
</protein>
<organism>
    <name type="scientific">Parafrankia sp. (strain EAN1pec)</name>
    <dbReference type="NCBI Taxonomy" id="298653"/>
    <lineage>
        <taxon>Bacteria</taxon>
        <taxon>Bacillati</taxon>
        <taxon>Actinomycetota</taxon>
        <taxon>Actinomycetes</taxon>
        <taxon>Frankiales</taxon>
        <taxon>Frankiaceae</taxon>
        <taxon>Parafrankia</taxon>
    </lineage>
</organism>
<accession>A8KZE6</accession>
<comment type="function">
    <text evidence="1">The RuvA-RuvB-RuvC complex processes Holliday junction (HJ) DNA during genetic recombination and DNA repair, while the RuvA-RuvB complex plays an important role in the rescue of blocked DNA replication forks via replication fork reversal (RFR). RuvA specifically binds to HJ cruciform DNA, conferring on it an open structure. The RuvB hexamer acts as an ATP-dependent pump, pulling dsDNA into and through the RuvAB complex. RuvB forms 2 homohexamers on either side of HJ DNA bound by 1 or 2 RuvA tetramers; 4 subunits per hexamer contact DNA at a time. Coordinated motions by a converter formed by DNA-disengaged RuvB subunits stimulates ATP hydrolysis and nucleotide exchange. Immobilization of the converter enables RuvB to convert the ATP-contained energy into a lever motion, pulling 2 nucleotides of DNA out of the RuvA tetramer per ATP hydrolyzed, thus driving DNA branch migration. The RuvB motors rotate together with the DNA substrate, which together with the progressing nucleotide cycle form the mechanistic basis for DNA recombination by continuous HJ branch migration. Branch migration allows RuvC to scan DNA until it finds its consensus sequence, where it cleaves and resolves cruciform DNA.</text>
</comment>
<comment type="catalytic activity">
    <reaction evidence="1">
        <text>ATP + H2O = ADP + phosphate + H(+)</text>
        <dbReference type="Rhea" id="RHEA:13065"/>
        <dbReference type="ChEBI" id="CHEBI:15377"/>
        <dbReference type="ChEBI" id="CHEBI:15378"/>
        <dbReference type="ChEBI" id="CHEBI:30616"/>
        <dbReference type="ChEBI" id="CHEBI:43474"/>
        <dbReference type="ChEBI" id="CHEBI:456216"/>
    </reaction>
</comment>
<comment type="subunit">
    <text evidence="1">Homohexamer. Forms an RuvA(8)-RuvB(12)-Holliday junction (HJ) complex. HJ DNA is sandwiched between 2 RuvA tetramers; dsDNA enters through RuvA and exits via RuvB. An RuvB hexamer assembles on each DNA strand where it exits the tetramer. Each RuvB hexamer is contacted by two RuvA subunits (via domain III) on 2 adjacent RuvB subunits; this complex drives branch migration. In the full resolvosome a probable DNA-RuvA(4)-RuvB(12)-RuvC(2) complex forms which resolves the HJ.</text>
</comment>
<comment type="subcellular location">
    <subcellularLocation>
        <location evidence="1">Cytoplasm</location>
    </subcellularLocation>
</comment>
<comment type="domain">
    <text evidence="1">Has 3 domains, the large (RuvB-L) and small ATPase (RuvB-S) domains and the C-terminal head (RuvB-H) domain. The head domain binds DNA, while the ATPase domains jointly bind ATP, ADP or are empty depending on the state of the subunit in the translocation cycle. During a single DNA translocation step the structure of each domain remains the same, but their relative positions change.</text>
</comment>
<comment type="similarity">
    <text evidence="1">Belongs to the RuvB family.</text>
</comment>
<reference key="1">
    <citation type="journal article" date="2007" name="Genome Res.">
        <title>Genome characteristics of facultatively symbiotic Frankia sp. strains reflect host range and host plant biogeography.</title>
        <authorList>
            <person name="Normand P."/>
            <person name="Lapierre P."/>
            <person name="Tisa L.S."/>
            <person name="Gogarten J.P."/>
            <person name="Alloisio N."/>
            <person name="Bagnarol E."/>
            <person name="Bassi C.A."/>
            <person name="Berry A.M."/>
            <person name="Bickhart D.M."/>
            <person name="Choisne N."/>
            <person name="Couloux A."/>
            <person name="Cournoyer B."/>
            <person name="Cruveiller S."/>
            <person name="Daubin V."/>
            <person name="Demange N."/>
            <person name="Francino M.P."/>
            <person name="Goltsman E."/>
            <person name="Huang Y."/>
            <person name="Kopp O.R."/>
            <person name="Labarre L."/>
            <person name="Lapidus A."/>
            <person name="Lavire C."/>
            <person name="Marechal J."/>
            <person name="Martinez M."/>
            <person name="Mastronunzio J.E."/>
            <person name="Mullin B.C."/>
            <person name="Niemann J."/>
            <person name="Pujic P."/>
            <person name="Rawnsley T."/>
            <person name="Rouy Z."/>
            <person name="Schenowitz C."/>
            <person name="Sellstedt A."/>
            <person name="Tavares F."/>
            <person name="Tomkins J.P."/>
            <person name="Vallenet D."/>
            <person name="Valverde C."/>
            <person name="Wall L.G."/>
            <person name="Wang Y."/>
            <person name="Medigue C."/>
            <person name="Benson D.R."/>
        </authorList>
    </citation>
    <scope>NUCLEOTIDE SEQUENCE [LARGE SCALE GENOMIC DNA]</scope>
    <source>
        <strain>EAN1pec</strain>
    </source>
</reference>
<dbReference type="EC" id="3.6.4.-" evidence="1"/>
<dbReference type="EMBL" id="CP000820">
    <property type="protein sequence ID" value="ABW14502.1"/>
    <property type="molecule type" value="Genomic_DNA"/>
</dbReference>
<dbReference type="RefSeq" id="WP_020462617.1">
    <property type="nucleotide sequence ID" value="NC_009921.1"/>
</dbReference>
<dbReference type="SMR" id="A8KZE6"/>
<dbReference type="STRING" id="298653.Franean1_5144"/>
<dbReference type="KEGG" id="fre:Franean1_5144"/>
<dbReference type="eggNOG" id="COG2255">
    <property type="taxonomic scope" value="Bacteria"/>
</dbReference>
<dbReference type="HOGENOM" id="CLU_055599_1_0_11"/>
<dbReference type="GO" id="GO:0005737">
    <property type="term" value="C:cytoplasm"/>
    <property type="evidence" value="ECO:0007669"/>
    <property type="project" value="UniProtKB-SubCell"/>
</dbReference>
<dbReference type="GO" id="GO:0048476">
    <property type="term" value="C:Holliday junction resolvase complex"/>
    <property type="evidence" value="ECO:0007669"/>
    <property type="project" value="UniProtKB-UniRule"/>
</dbReference>
<dbReference type="GO" id="GO:0005524">
    <property type="term" value="F:ATP binding"/>
    <property type="evidence" value="ECO:0007669"/>
    <property type="project" value="UniProtKB-UniRule"/>
</dbReference>
<dbReference type="GO" id="GO:0016887">
    <property type="term" value="F:ATP hydrolysis activity"/>
    <property type="evidence" value="ECO:0007669"/>
    <property type="project" value="InterPro"/>
</dbReference>
<dbReference type="GO" id="GO:0000400">
    <property type="term" value="F:four-way junction DNA binding"/>
    <property type="evidence" value="ECO:0007669"/>
    <property type="project" value="UniProtKB-UniRule"/>
</dbReference>
<dbReference type="GO" id="GO:0009378">
    <property type="term" value="F:four-way junction helicase activity"/>
    <property type="evidence" value="ECO:0007669"/>
    <property type="project" value="InterPro"/>
</dbReference>
<dbReference type="GO" id="GO:0006310">
    <property type="term" value="P:DNA recombination"/>
    <property type="evidence" value="ECO:0007669"/>
    <property type="project" value="UniProtKB-UniRule"/>
</dbReference>
<dbReference type="GO" id="GO:0006281">
    <property type="term" value="P:DNA repair"/>
    <property type="evidence" value="ECO:0007669"/>
    <property type="project" value="UniProtKB-UniRule"/>
</dbReference>
<dbReference type="CDD" id="cd00009">
    <property type="entry name" value="AAA"/>
    <property type="match status" value="1"/>
</dbReference>
<dbReference type="Gene3D" id="1.10.8.60">
    <property type="match status" value="1"/>
</dbReference>
<dbReference type="Gene3D" id="3.40.50.300">
    <property type="entry name" value="P-loop containing nucleotide triphosphate hydrolases"/>
    <property type="match status" value="1"/>
</dbReference>
<dbReference type="Gene3D" id="1.10.10.10">
    <property type="entry name" value="Winged helix-like DNA-binding domain superfamily/Winged helix DNA-binding domain"/>
    <property type="match status" value="1"/>
</dbReference>
<dbReference type="HAMAP" id="MF_00016">
    <property type="entry name" value="DNA_HJ_migration_RuvB"/>
    <property type="match status" value="1"/>
</dbReference>
<dbReference type="InterPro" id="IPR003593">
    <property type="entry name" value="AAA+_ATPase"/>
</dbReference>
<dbReference type="InterPro" id="IPR041445">
    <property type="entry name" value="AAA_lid_4"/>
</dbReference>
<dbReference type="InterPro" id="IPR004605">
    <property type="entry name" value="DNA_helicase_Holl-junc_RuvB"/>
</dbReference>
<dbReference type="InterPro" id="IPR027417">
    <property type="entry name" value="P-loop_NTPase"/>
</dbReference>
<dbReference type="InterPro" id="IPR008824">
    <property type="entry name" value="RuvB-like_N"/>
</dbReference>
<dbReference type="InterPro" id="IPR008823">
    <property type="entry name" value="RuvB_C"/>
</dbReference>
<dbReference type="InterPro" id="IPR036388">
    <property type="entry name" value="WH-like_DNA-bd_sf"/>
</dbReference>
<dbReference type="InterPro" id="IPR036390">
    <property type="entry name" value="WH_DNA-bd_sf"/>
</dbReference>
<dbReference type="NCBIfam" id="NF000868">
    <property type="entry name" value="PRK00080.1"/>
    <property type="match status" value="1"/>
</dbReference>
<dbReference type="NCBIfam" id="TIGR00635">
    <property type="entry name" value="ruvB"/>
    <property type="match status" value="1"/>
</dbReference>
<dbReference type="PANTHER" id="PTHR42848">
    <property type="match status" value="1"/>
</dbReference>
<dbReference type="PANTHER" id="PTHR42848:SF1">
    <property type="entry name" value="HOLLIDAY JUNCTION BRANCH MIGRATION COMPLEX SUBUNIT RUVB"/>
    <property type="match status" value="1"/>
</dbReference>
<dbReference type="Pfam" id="PF17864">
    <property type="entry name" value="AAA_lid_4"/>
    <property type="match status" value="1"/>
</dbReference>
<dbReference type="Pfam" id="PF05491">
    <property type="entry name" value="RuvB_C"/>
    <property type="match status" value="1"/>
</dbReference>
<dbReference type="Pfam" id="PF05496">
    <property type="entry name" value="RuvB_N"/>
    <property type="match status" value="1"/>
</dbReference>
<dbReference type="SMART" id="SM00382">
    <property type="entry name" value="AAA"/>
    <property type="match status" value="1"/>
</dbReference>
<dbReference type="SUPFAM" id="SSF52540">
    <property type="entry name" value="P-loop containing nucleoside triphosphate hydrolases"/>
    <property type="match status" value="1"/>
</dbReference>
<dbReference type="SUPFAM" id="SSF46785">
    <property type="entry name" value="Winged helix' DNA-binding domain"/>
    <property type="match status" value="1"/>
</dbReference>
<proteinExistence type="inferred from homology"/>
<evidence type="ECO:0000255" key="1">
    <source>
        <dbReference type="HAMAP-Rule" id="MF_00016"/>
    </source>
</evidence>